<keyword id="KW-0627">Porphyrin biosynthesis</keyword>
<keyword id="KW-0808">Transferase</keyword>
<protein>
    <recommendedName>
        <fullName evidence="1">Porphobilinogen deaminase</fullName>
        <shortName evidence="1">PBG</shortName>
        <ecNumber evidence="1">2.5.1.61</ecNumber>
    </recommendedName>
    <alternativeName>
        <fullName evidence="1">Hydroxymethylbilane synthase</fullName>
        <shortName evidence="1">HMBS</shortName>
    </alternativeName>
    <alternativeName>
        <fullName evidence="1">Pre-uroporphyrinogen synthase</fullName>
    </alternativeName>
</protein>
<sequence length="314" mass="33838">MQTASFKNGTLKIGTRGSKLALAQAYLTRRLLQEAHGLPEDAIEILPMSTAGDRIQDRPLSEVGGKGLFTEEIEQALKDGRIDIAVHSTKDMPTALPEGLHLSVFLEREDPRDAFIGRSARRFMDLPQGATVGSSSLRRQALIRRLRPDIEVVMYRGNVDTRLRKLDAGEVDGTFLACAGLRRLGLADVITDVLDPSVFPPAPGQGAIGIESRIGDERIDVLLAPLAHRETQIALACERAFLGALDGSCRTPIAGLATVEGDRLSFRGMILTPDGRQAHEVTAEGVVSDAAALGTDAANRVRAMAGPHFFDGWQ</sequence>
<feature type="chain" id="PRO_1000125655" description="Porphobilinogen deaminase">
    <location>
        <begin position="1"/>
        <end position="314"/>
    </location>
</feature>
<feature type="modified residue" description="S-(dipyrrolylmethanemethyl)cysteine" evidence="1">
    <location>
        <position position="249"/>
    </location>
</feature>
<gene>
    <name evidence="1" type="primary">hemC</name>
    <name type="ordered locus">BMEA_A1940</name>
</gene>
<accession>C0RFD1</accession>
<organism>
    <name type="scientific">Brucella melitensis biotype 2 (strain ATCC 23457)</name>
    <dbReference type="NCBI Taxonomy" id="546272"/>
    <lineage>
        <taxon>Bacteria</taxon>
        <taxon>Pseudomonadati</taxon>
        <taxon>Pseudomonadota</taxon>
        <taxon>Alphaproteobacteria</taxon>
        <taxon>Hyphomicrobiales</taxon>
        <taxon>Brucellaceae</taxon>
        <taxon>Brucella/Ochrobactrum group</taxon>
        <taxon>Brucella</taxon>
    </lineage>
</organism>
<comment type="function">
    <text evidence="1">Tetrapolymerization of the monopyrrole PBG into the hydroxymethylbilane pre-uroporphyrinogen in several discrete steps.</text>
</comment>
<comment type="catalytic activity">
    <reaction evidence="1">
        <text>4 porphobilinogen + H2O = hydroxymethylbilane + 4 NH4(+)</text>
        <dbReference type="Rhea" id="RHEA:13185"/>
        <dbReference type="ChEBI" id="CHEBI:15377"/>
        <dbReference type="ChEBI" id="CHEBI:28938"/>
        <dbReference type="ChEBI" id="CHEBI:57845"/>
        <dbReference type="ChEBI" id="CHEBI:58126"/>
        <dbReference type="EC" id="2.5.1.61"/>
    </reaction>
</comment>
<comment type="cofactor">
    <cofactor evidence="1">
        <name>dipyrromethane</name>
        <dbReference type="ChEBI" id="CHEBI:60342"/>
    </cofactor>
    <text evidence="1">Binds 1 dipyrromethane group covalently.</text>
</comment>
<comment type="pathway">
    <text evidence="1">Porphyrin-containing compound metabolism; protoporphyrin-IX biosynthesis; coproporphyrinogen-III from 5-aminolevulinate: step 2/4.</text>
</comment>
<comment type="subunit">
    <text evidence="1">Monomer.</text>
</comment>
<comment type="miscellaneous">
    <text evidence="1">The porphobilinogen subunits are added to the dipyrromethane group.</text>
</comment>
<comment type="similarity">
    <text evidence="1">Belongs to the HMBS family.</text>
</comment>
<name>HEM3_BRUMB</name>
<proteinExistence type="inferred from homology"/>
<reference key="1">
    <citation type="submission" date="2009-03" db="EMBL/GenBank/DDBJ databases">
        <title>Brucella melitensis ATCC 23457 whole genome shotgun sequencing project.</title>
        <authorList>
            <person name="Setubal J.C."/>
            <person name="Boyle S."/>
            <person name="Crasta O.R."/>
            <person name="Gillespie J.J."/>
            <person name="Kenyon R.W."/>
            <person name="Lu J."/>
            <person name="Mane S."/>
            <person name="Nagrani S."/>
            <person name="Shallom J.M."/>
            <person name="Shallom S."/>
            <person name="Shukla M."/>
            <person name="Snyder E.E."/>
            <person name="Sobral B.W."/>
            <person name="Wattam A.R."/>
            <person name="Will R."/>
            <person name="Williams K."/>
            <person name="Yoo H."/>
            <person name="Munk C."/>
            <person name="Tapia R."/>
            <person name="Han C."/>
            <person name="Detter J.C."/>
            <person name="Bruce D."/>
            <person name="Brettin T.S."/>
        </authorList>
    </citation>
    <scope>NUCLEOTIDE SEQUENCE [LARGE SCALE GENOMIC DNA]</scope>
    <source>
        <strain>ATCC 23457</strain>
    </source>
</reference>
<evidence type="ECO:0000255" key="1">
    <source>
        <dbReference type="HAMAP-Rule" id="MF_00260"/>
    </source>
</evidence>
<dbReference type="EC" id="2.5.1.61" evidence="1"/>
<dbReference type="EMBL" id="CP001488">
    <property type="protein sequence ID" value="ACO01603.1"/>
    <property type="molecule type" value="Genomic_DNA"/>
</dbReference>
<dbReference type="RefSeq" id="WP_002964957.1">
    <property type="nucleotide sequence ID" value="NC_012441.1"/>
</dbReference>
<dbReference type="SMR" id="C0RFD1"/>
<dbReference type="GeneID" id="93017780"/>
<dbReference type="KEGG" id="bmi:BMEA_A1940"/>
<dbReference type="HOGENOM" id="CLU_019704_1_2_5"/>
<dbReference type="UniPathway" id="UPA00251">
    <property type="reaction ID" value="UER00319"/>
</dbReference>
<dbReference type="Proteomes" id="UP000001748">
    <property type="component" value="Chromosome I"/>
</dbReference>
<dbReference type="GO" id="GO:0005737">
    <property type="term" value="C:cytoplasm"/>
    <property type="evidence" value="ECO:0007669"/>
    <property type="project" value="TreeGrafter"/>
</dbReference>
<dbReference type="GO" id="GO:0004418">
    <property type="term" value="F:hydroxymethylbilane synthase activity"/>
    <property type="evidence" value="ECO:0007669"/>
    <property type="project" value="UniProtKB-UniRule"/>
</dbReference>
<dbReference type="GO" id="GO:0006782">
    <property type="term" value="P:protoporphyrinogen IX biosynthetic process"/>
    <property type="evidence" value="ECO:0007669"/>
    <property type="project" value="UniProtKB-UniRule"/>
</dbReference>
<dbReference type="FunFam" id="3.40.190.10:FF:000004">
    <property type="entry name" value="Porphobilinogen deaminase"/>
    <property type="match status" value="1"/>
</dbReference>
<dbReference type="FunFam" id="3.40.190.10:FF:000005">
    <property type="entry name" value="Porphobilinogen deaminase"/>
    <property type="match status" value="1"/>
</dbReference>
<dbReference type="Gene3D" id="3.40.190.10">
    <property type="entry name" value="Periplasmic binding protein-like II"/>
    <property type="match status" value="2"/>
</dbReference>
<dbReference type="Gene3D" id="3.30.160.40">
    <property type="entry name" value="Porphobilinogen deaminase, C-terminal domain"/>
    <property type="match status" value="1"/>
</dbReference>
<dbReference type="HAMAP" id="MF_00260">
    <property type="entry name" value="Porphobil_deam"/>
    <property type="match status" value="1"/>
</dbReference>
<dbReference type="InterPro" id="IPR000860">
    <property type="entry name" value="HemC"/>
</dbReference>
<dbReference type="InterPro" id="IPR022419">
    <property type="entry name" value="Porphobilin_deaminase_cofac_BS"/>
</dbReference>
<dbReference type="InterPro" id="IPR022417">
    <property type="entry name" value="Porphobilin_deaminase_N"/>
</dbReference>
<dbReference type="InterPro" id="IPR022418">
    <property type="entry name" value="Porphobilinogen_deaminase_C"/>
</dbReference>
<dbReference type="InterPro" id="IPR036803">
    <property type="entry name" value="Porphobilinogen_deaminase_C_sf"/>
</dbReference>
<dbReference type="NCBIfam" id="TIGR00212">
    <property type="entry name" value="hemC"/>
    <property type="match status" value="1"/>
</dbReference>
<dbReference type="PANTHER" id="PTHR11557">
    <property type="entry name" value="PORPHOBILINOGEN DEAMINASE"/>
    <property type="match status" value="1"/>
</dbReference>
<dbReference type="PANTHER" id="PTHR11557:SF0">
    <property type="entry name" value="PORPHOBILINOGEN DEAMINASE"/>
    <property type="match status" value="1"/>
</dbReference>
<dbReference type="Pfam" id="PF01379">
    <property type="entry name" value="Porphobil_deam"/>
    <property type="match status" value="1"/>
</dbReference>
<dbReference type="Pfam" id="PF03900">
    <property type="entry name" value="Porphobil_deamC"/>
    <property type="match status" value="1"/>
</dbReference>
<dbReference type="PIRSF" id="PIRSF001438">
    <property type="entry name" value="4pyrrol_synth_OHMeBilane_synth"/>
    <property type="match status" value="1"/>
</dbReference>
<dbReference type="PRINTS" id="PR00151">
    <property type="entry name" value="PORPHBDMNASE"/>
</dbReference>
<dbReference type="SUPFAM" id="SSF53850">
    <property type="entry name" value="Periplasmic binding protein-like II"/>
    <property type="match status" value="1"/>
</dbReference>
<dbReference type="SUPFAM" id="SSF54782">
    <property type="entry name" value="Porphobilinogen deaminase (hydroxymethylbilane synthase), C-terminal domain"/>
    <property type="match status" value="1"/>
</dbReference>
<dbReference type="PROSITE" id="PS00533">
    <property type="entry name" value="PORPHOBILINOGEN_DEAM"/>
    <property type="match status" value="1"/>
</dbReference>